<evidence type="ECO:0000250" key="1"/>
<evidence type="ECO:0000250" key="2">
    <source>
        <dbReference type="UniProtKB" id="P68363"/>
    </source>
</evidence>
<evidence type="ECO:0000305" key="3"/>
<name>TBA2_GOSHI</name>
<reference key="1">
    <citation type="submission" date="2003-07" db="EMBL/GenBank/DDBJ databases">
        <title>Cloning and expression of nine tubulin genes from elongating cotton fiber cells.</title>
        <authorList>
            <person name="Feng J.-X."/>
            <person name="Wei G."/>
            <person name="Wang L."/>
            <person name="Ji S.-J."/>
            <person name="Zhang T.-Z."/>
            <person name="Zhu Y.-X."/>
        </authorList>
    </citation>
    <scope>NUCLEOTIDE SEQUENCE [MRNA]</scope>
</reference>
<protein>
    <recommendedName>
        <fullName>Tubulin alpha-2 chain</fullName>
        <ecNumber evidence="2">3.6.5.-</ecNumber>
    </recommendedName>
    <alternativeName>
        <fullName>Alpha-2-tubulin</fullName>
    </alternativeName>
</protein>
<sequence length="450" mass="49541">MRECISIHIGQAGIQVGNACWELYCLEHGIQPDGQMPSDKTVGGGDDAFNTFFSETGAGKHVPRAVFVDLEPTVIDEVRTGAYRQLFHPEQLISGKEDAANNFARGHYTIGKEIVDLCLDRIRKLADNCTGLQGFLVFNAVGGGTGSGLGSLLLERLSVDYGKKSKLGFTVYPSPQVSTSVVEPYNSVLSTHSLLEHTDVAVLLDNEAIYDICRRSLDIERPTYTNLNRLVSQVISSLTASLRFDGALNVDVTEFQTNLVPYPRIHFMLSSYAPVISAEKAYHEQLSVAEITNSAFEPSSMMAKCDPRHGKYMACCLMYRGDVVPKDVNAAVASIKTKRTIQFVDWCPTGFKCGINYQPPTVVPGGDLAKVQRAVCMISNSTSVAEVFSRIDHKFDLMYAKRAFIHWYVGEGMEEGEFSEAREDLAALEKDYEEVGAESAEGDEGEDDEY</sequence>
<accession>Q6VAG0</accession>
<feature type="chain" id="PRO_0000048176" description="Tubulin alpha-2 chain">
    <location>
        <begin position="1"/>
        <end position="450"/>
    </location>
</feature>
<feature type="active site" evidence="2">
    <location>
        <position position="254"/>
    </location>
</feature>
<feature type="binding site" evidence="2">
    <location>
        <position position="11"/>
    </location>
    <ligand>
        <name>GTP</name>
        <dbReference type="ChEBI" id="CHEBI:37565"/>
    </ligand>
</feature>
<feature type="binding site" evidence="2">
    <location>
        <position position="71"/>
    </location>
    <ligand>
        <name>GTP</name>
        <dbReference type="ChEBI" id="CHEBI:37565"/>
    </ligand>
</feature>
<feature type="binding site" evidence="2">
    <location>
        <position position="71"/>
    </location>
    <ligand>
        <name>Mg(2+)</name>
        <dbReference type="ChEBI" id="CHEBI:18420"/>
    </ligand>
</feature>
<feature type="binding site" evidence="2">
    <location>
        <position position="144"/>
    </location>
    <ligand>
        <name>GTP</name>
        <dbReference type="ChEBI" id="CHEBI:37565"/>
    </ligand>
</feature>
<feature type="binding site" evidence="2">
    <location>
        <position position="145"/>
    </location>
    <ligand>
        <name>GTP</name>
        <dbReference type="ChEBI" id="CHEBI:37565"/>
    </ligand>
</feature>
<feature type="binding site" evidence="2">
    <location>
        <position position="179"/>
    </location>
    <ligand>
        <name>GTP</name>
        <dbReference type="ChEBI" id="CHEBI:37565"/>
    </ligand>
</feature>
<feature type="binding site" evidence="2">
    <location>
        <position position="206"/>
    </location>
    <ligand>
        <name>GTP</name>
        <dbReference type="ChEBI" id="CHEBI:37565"/>
    </ligand>
</feature>
<feature type="binding site" evidence="2">
    <location>
        <position position="228"/>
    </location>
    <ligand>
        <name>GTP</name>
        <dbReference type="ChEBI" id="CHEBI:37565"/>
    </ligand>
</feature>
<feature type="site" description="Involved in polymerization" evidence="1">
    <location>
        <position position="450"/>
    </location>
</feature>
<feature type="modified residue" description="N6-acetyllysine" evidence="1">
    <location>
        <position position="40"/>
    </location>
</feature>
<dbReference type="EC" id="3.6.5.-" evidence="2"/>
<dbReference type="EMBL" id="AY345604">
    <property type="protein sequence ID" value="AAQ92662.1"/>
    <property type="molecule type" value="mRNA"/>
</dbReference>
<dbReference type="RefSeq" id="NP_001313788.1">
    <property type="nucleotide sequence ID" value="NM_001326859.1"/>
</dbReference>
<dbReference type="SMR" id="Q6VAG0"/>
<dbReference type="STRING" id="3635.Q6VAG0"/>
<dbReference type="PaxDb" id="3635-Q6VAG0"/>
<dbReference type="GeneID" id="107898755"/>
<dbReference type="KEGG" id="ghi:107898755"/>
<dbReference type="OrthoDB" id="25654at41938"/>
<dbReference type="Proteomes" id="UP000189702">
    <property type="component" value="Unplaced"/>
</dbReference>
<dbReference type="GO" id="GO:0005737">
    <property type="term" value="C:cytoplasm"/>
    <property type="evidence" value="ECO:0000318"/>
    <property type="project" value="GO_Central"/>
</dbReference>
<dbReference type="GO" id="GO:0005874">
    <property type="term" value="C:microtubule"/>
    <property type="evidence" value="ECO:0000318"/>
    <property type="project" value="GO_Central"/>
</dbReference>
<dbReference type="GO" id="GO:0005525">
    <property type="term" value="F:GTP binding"/>
    <property type="evidence" value="ECO:0000318"/>
    <property type="project" value="GO_Central"/>
</dbReference>
<dbReference type="GO" id="GO:0016787">
    <property type="term" value="F:hydrolase activity"/>
    <property type="evidence" value="ECO:0007669"/>
    <property type="project" value="UniProtKB-KW"/>
</dbReference>
<dbReference type="GO" id="GO:0046872">
    <property type="term" value="F:metal ion binding"/>
    <property type="evidence" value="ECO:0007669"/>
    <property type="project" value="UniProtKB-KW"/>
</dbReference>
<dbReference type="GO" id="GO:0005200">
    <property type="term" value="F:structural constituent of cytoskeleton"/>
    <property type="evidence" value="ECO:0000318"/>
    <property type="project" value="GO_Central"/>
</dbReference>
<dbReference type="GO" id="GO:0000226">
    <property type="term" value="P:microtubule cytoskeleton organization"/>
    <property type="evidence" value="ECO:0000318"/>
    <property type="project" value="GO_Central"/>
</dbReference>
<dbReference type="GO" id="GO:0000278">
    <property type="term" value="P:mitotic cell cycle"/>
    <property type="evidence" value="ECO:0000318"/>
    <property type="project" value="GO_Central"/>
</dbReference>
<dbReference type="CDD" id="cd02186">
    <property type="entry name" value="alpha_tubulin"/>
    <property type="match status" value="1"/>
</dbReference>
<dbReference type="FunFam" id="1.10.287.600:FF:000005">
    <property type="entry name" value="Tubulin alpha chain"/>
    <property type="match status" value="1"/>
</dbReference>
<dbReference type="FunFam" id="3.30.1330.20:FF:000001">
    <property type="entry name" value="Tubulin alpha chain"/>
    <property type="match status" value="1"/>
</dbReference>
<dbReference type="FunFam" id="3.40.50.1440:FF:000004">
    <property type="entry name" value="Tubulin alpha chain"/>
    <property type="match status" value="1"/>
</dbReference>
<dbReference type="Gene3D" id="1.10.287.600">
    <property type="entry name" value="Helix hairpin bin"/>
    <property type="match status" value="1"/>
</dbReference>
<dbReference type="Gene3D" id="3.30.1330.20">
    <property type="entry name" value="Tubulin/FtsZ, C-terminal domain"/>
    <property type="match status" value="1"/>
</dbReference>
<dbReference type="Gene3D" id="3.40.50.1440">
    <property type="entry name" value="Tubulin/FtsZ, GTPase domain"/>
    <property type="match status" value="1"/>
</dbReference>
<dbReference type="InterPro" id="IPR002452">
    <property type="entry name" value="Alpha_tubulin"/>
</dbReference>
<dbReference type="InterPro" id="IPR008280">
    <property type="entry name" value="Tub_FtsZ_C"/>
</dbReference>
<dbReference type="InterPro" id="IPR000217">
    <property type="entry name" value="Tubulin"/>
</dbReference>
<dbReference type="InterPro" id="IPR037103">
    <property type="entry name" value="Tubulin/FtsZ-like_C"/>
</dbReference>
<dbReference type="InterPro" id="IPR018316">
    <property type="entry name" value="Tubulin/FtsZ_2-layer-sand-dom"/>
</dbReference>
<dbReference type="InterPro" id="IPR036525">
    <property type="entry name" value="Tubulin/FtsZ_GTPase_sf"/>
</dbReference>
<dbReference type="InterPro" id="IPR023123">
    <property type="entry name" value="Tubulin_C"/>
</dbReference>
<dbReference type="InterPro" id="IPR017975">
    <property type="entry name" value="Tubulin_CS"/>
</dbReference>
<dbReference type="InterPro" id="IPR003008">
    <property type="entry name" value="Tubulin_FtsZ_GTPase"/>
</dbReference>
<dbReference type="PANTHER" id="PTHR11588">
    <property type="entry name" value="TUBULIN"/>
    <property type="match status" value="1"/>
</dbReference>
<dbReference type="Pfam" id="PF00091">
    <property type="entry name" value="Tubulin"/>
    <property type="match status" value="1"/>
</dbReference>
<dbReference type="Pfam" id="PF03953">
    <property type="entry name" value="Tubulin_C"/>
    <property type="match status" value="1"/>
</dbReference>
<dbReference type="PRINTS" id="PR01162">
    <property type="entry name" value="ALPHATUBULIN"/>
</dbReference>
<dbReference type="PRINTS" id="PR01161">
    <property type="entry name" value="TUBULIN"/>
</dbReference>
<dbReference type="SMART" id="SM00864">
    <property type="entry name" value="Tubulin"/>
    <property type="match status" value="1"/>
</dbReference>
<dbReference type="SMART" id="SM00865">
    <property type="entry name" value="Tubulin_C"/>
    <property type="match status" value="1"/>
</dbReference>
<dbReference type="SUPFAM" id="SSF55307">
    <property type="entry name" value="Tubulin C-terminal domain-like"/>
    <property type="match status" value="1"/>
</dbReference>
<dbReference type="SUPFAM" id="SSF52490">
    <property type="entry name" value="Tubulin nucleotide-binding domain-like"/>
    <property type="match status" value="1"/>
</dbReference>
<dbReference type="PROSITE" id="PS00227">
    <property type="entry name" value="TUBULIN"/>
    <property type="match status" value="1"/>
</dbReference>
<proteinExistence type="evidence at transcript level"/>
<organism>
    <name type="scientific">Gossypium hirsutum</name>
    <name type="common">Upland cotton</name>
    <name type="synonym">Gossypium mexicanum</name>
    <dbReference type="NCBI Taxonomy" id="3635"/>
    <lineage>
        <taxon>Eukaryota</taxon>
        <taxon>Viridiplantae</taxon>
        <taxon>Streptophyta</taxon>
        <taxon>Embryophyta</taxon>
        <taxon>Tracheophyta</taxon>
        <taxon>Spermatophyta</taxon>
        <taxon>Magnoliopsida</taxon>
        <taxon>eudicotyledons</taxon>
        <taxon>Gunneridae</taxon>
        <taxon>Pentapetalae</taxon>
        <taxon>rosids</taxon>
        <taxon>malvids</taxon>
        <taxon>Malvales</taxon>
        <taxon>Malvaceae</taxon>
        <taxon>Malvoideae</taxon>
        <taxon>Gossypium</taxon>
    </lineage>
</organism>
<keyword id="KW-0007">Acetylation</keyword>
<keyword id="KW-0963">Cytoplasm</keyword>
<keyword id="KW-0206">Cytoskeleton</keyword>
<keyword id="KW-0342">GTP-binding</keyword>
<keyword id="KW-0378">Hydrolase</keyword>
<keyword id="KW-0460">Magnesium</keyword>
<keyword id="KW-0479">Metal-binding</keyword>
<keyword id="KW-0493">Microtubule</keyword>
<keyword id="KW-0547">Nucleotide-binding</keyword>
<keyword id="KW-1185">Reference proteome</keyword>
<comment type="function">
    <text>Tubulin is the major constituent of microtubules, a cylinder consisting of laterally associated linear protofilaments composed of alpha- and beta-tubulin heterodimers. Microtubules grow by the addition of GTP-tubulin dimers to the microtubule end, where a stabilizing cap forms. Below the cap, tubulin dimers are in GDP-bound state, owing to GTPase activity of alpha-tubulin.</text>
</comment>
<comment type="catalytic activity">
    <reaction evidence="2">
        <text>GTP + H2O = GDP + phosphate + H(+)</text>
        <dbReference type="Rhea" id="RHEA:19669"/>
        <dbReference type="ChEBI" id="CHEBI:15377"/>
        <dbReference type="ChEBI" id="CHEBI:15378"/>
        <dbReference type="ChEBI" id="CHEBI:37565"/>
        <dbReference type="ChEBI" id="CHEBI:43474"/>
        <dbReference type="ChEBI" id="CHEBI:58189"/>
    </reaction>
    <physiologicalReaction direction="left-to-right" evidence="2">
        <dbReference type="Rhea" id="RHEA:19670"/>
    </physiologicalReaction>
</comment>
<comment type="cofactor">
    <cofactor evidence="2">
        <name>Mg(2+)</name>
        <dbReference type="ChEBI" id="CHEBI:18420"/>
    </cofactor>
</comment>
<comment type="subunit">
    <text>Dimer of alpha and beta chains. A typical microtubule is a hollow water-filled tube with an outer diameter of 25 nm and an inner diameter of 15 nM. Alpha-beta heterodimers associate head-to-tail to form protofilaments running lengthwise along the microtubule wall with the beta-tubulin subunit facing the microtubule plus end conferring a structural polarity. Microtubules usually have 13 protofilaments but different protofilament numbers can be found in some organisms and specialized cells.</text>
</comment>
<comment type="subcellular location">
    <subcellularLocation>
        <location>Cytoplasm</location>
        <location>Cytoskeleton</location>
    </subcellularLocation>
</comment>
<comment type="PTM">
    <text evidence="1">Undergoes a tyrosination/detyrosination cycle, the cyclic removal and re-addition of a C-terminal tyrosine residue by the enzymes tubulin tyrosine carboxypeptidase (TTCP) and tubulin tyrosine ligase (TTL), respectively.</text>
</comment>
<comment type="PTM">
    <text evidence="1">Acetylation of alpha chains at Lys-40 stabilizes microtubules and affects affinity and processivity of microtubule motors. This modification has a role in multiple cellular functions, ranging from cell motility, cell cycle progression or cell differentiation to intracellular trafficking and signaling (By similarity).</text>
</comment>
<comment type="similarity">
    <text evidence="3">Belongs to the tubulin family.</text>
</comment>